<feature type="chain" id="PRO_0000265070" description="Putative 3-methyladenine DNA glycosylase">
    <location>
        <begin position="1"/>
        <end position="169"/>
    </location>
</feature>
<comment type="similarity">
    <text evidence="1">Belongs to the DNA glycosylase MPG family.</text>
</comment>
<comment type="sequence caution" evidence="2">
    <conflict type="erroneous initiation">
        <sequence resource="EMBL-CDS" id="AAW70843"/>
    </conflict>
</comment>
<accession>Q5GT31</accession>
<proteinExistence type="inferred from homology"/>
<organism>
    <name type="scientific">Wolbachia sp. subsp. Brugia malayi (strain TRS)</name>
    <dbReference type="NCBI Taxonomy" id="292805"/>
    <lineage>
        <taxon>Bacteria</taxon>
        <taxon>Pseudomonadati</taxon>
        <taxon>Pseudomonadota</taxon>
        <taxon>Alphaproteobacteria</taxon>
        <taxon>Rickettsiales</taxon>
        <taxon>Anaplasmataceae</taxon>
        <taxon>Wolbachieae</taxon>
        <taxon>Wolbachia</taxon>
    </lineage>
</organism>
<gene>
    <name type="ordered locus">Wbm0254</name>
</gene>
<name>3MGH_WOLTR</name>
<dbReference type="EC" id="3.2.2.-" evidence="1"/>
<dbReference type="EMBL" id="AE017321">
    <property type="protein sequence ID" value="AAW70843.1"/>
    <property type="status" value="ALT_INIT"/>
    <property type="molecule type" value="Genomic_DNA"/>
</dbReference>
<dbReference type="RefSeq" id="WP_041571549.1">
    <property type="nucleotide sequence ID" value="NC_006833.1"/>
</dbReference>
<dbReference type="SMR" id="Q5GT31"/>
<dbReference type="STRING" id="292805.Wbm0254"/>
<dbReference type="KEGG" id="wbm:Wbm0254"/>
<dbReference type="eggNOG" id="COG2094">
    <property type="taxonomic scope" value="Bacteria"/>
</dbReference>
<dbReference type="HOGENOM" id="CLU_060471_4_1_5"/>
<dbReference type="Proteomes" id="UP000000534">
    <property type="component" value="Chromosome"/>
</dbReference>
<dbReference type="GO" id="GO:0003905">
    <property type="term" value="F:alkylbase DNA N-glycosylase activity"/>
    <property type="evidence" value="ECO:0007669"/>
    <property type="project" value="InterPro"/>
</dbReference>
<dbReference type="GO" id="GO:0003677">
    <property type="term" value="F:DNA binding"/>
    <property type="evidence" value="ECO:0007669"/>
    <property type="project" value="InterPro"/>
</dbReference>
<dbReference type="GO" id="GO:0006284">
    <property type="term" value="P:base-excision repair"/>
    <property type="evidence" value="ECO:0007669"/>
    <property type="project" value="InterPro"/>
</dbReference>
<dbReference type="CDD" id="cd00540">
    <property type="entry name" value="AAG"/>
    <property type="match status" value="1"/>
</dbReference>
<dbReference type="Gene3D" id="3.10.300.10">
    <property type="entry name" value="Methylpurine-DNA glycosylase (MPG)"/>
    <property type="match status" value="2"/>
</dbReference>
<dbReference type="HAMAP" id="MF_00527">
    <property type="entry name" value="3MGH"/>
    <property type="match status" value="1"/>
</dbReference>
<dbReference type="InterPro" id="IPR011034">
    <property type="entry name" value="Formyl_transferase-like_C_sf"/>
</dbReference>
<dbReference type="InterPro" id="IPR003180">
    <property type="entry name" value="MPG"/>
</dbReference>
<dbReference type="InterPro" id="IPR036995">
    <property type="entry name" value="MPG_sf"/>
</dbReference>
<dbReference type="NCBIfam" id="TIGR00567">
    <property type="entry name" value="3mg"/>
    <property type="match status" value="1"/>
</dbReference>
<dbReference type="NCBIfam" id="NF002004">
    <property type="entry name" value="PRK00802.1-4"/>
    <property type="match status" value="1"/>
</dbReference>
<dbReference type="PANTHER" id="PTHR10429">
    <property type="entry name" value="DNA-3-METHYLADENINE GLYCOSYLASE"/>
    <property type="match status" value="1"/>
</dbReference>
<dbReference type="PANTHER" id="PTHR10429:SF0">
    <property type="entry name" value="DNA-3-METHYLADENINE GLYCOSYLASE"/>
    <property type="match status" value="1"/>
</dbReference>
<dbReference type="Pfam" id="PF02245">
    <property type="entry name" value="Pur_DNA_glyco"/>
    <property type="match status" value="1"/>
</dbReference>
<dbReference type="SUPFAM" id="SSF50486">
    <property type="entry name" value="FMT C-terminal domain-like"/>
    <property type="match status" value="1"/>
</dbReference>
<reference key="1">
    <citation type="journal article" date="2005" name="PLoS Biol.">
        <title>The Wolbachia genome of Brugia malayi: endosymbiont evolution within a human pathogenic nematode.</title>
        <authorList>
            <person name="Foster J."/>
            <person name="Ganatra M."/>
            <person name="Kamal I."/>
            <person name="Ware J."/>
            <person name="Makarova K."/>
            <person name="Ivanova N."/>
            <person name="Bhattacharyya A."/>
            <person name="Kapatral V."/>
            <person name="Kumar S."/>
            <person name="Posfai J."/>
            <person name="Vincze T."/>
            <person name="Ingram J."/>
            <person name="Moran L."/>
            <person name="Lapidus A."/>
            <person name="Omelchenko M."/>
            <person name="Kyrpides N."/>
            <person name="Ghedin E."/>
            <person name="Wang S."/>
            <person name="Goltsman E."/>
            <person name="Joukov V."/>
            <person name="Ostrovskaya O."/>
            <person name="Tsukerman K."/>
            <person name="Mazur M."/>
            <person name="Comb D."/>
            <person name="Koonin E."/>
            <person name="Slatko B."/>
        </authorList>
    </citation>
    <scope>NUCLEOTIDE SEQUENCE [LARGE SCALE GENOMIC DNA]</scope>
    <source>
        <strain>TRS</strain>
    </source>
</reference>
<evidence type="ECO:0000255" key="1">
    <source>
        <dbReference type="HAMAP-Rule" id="MF_00527"/>
    </source>
</evidence>
<evidence type="ECO:0000305" key="2"/>
<sequence length="169" mass="19246">MNNEILPRNFYERPTLVVAGELLGKILKFSNFSGVITEVEAYIGMDDPACHAARGYTDRTSVMFGIPGFSYVYFIYGMYYCLNIVTETEGFPAAVLIRGLKLIEPLKANLSGPGILCKRLNITREHNKLDLTISHEFCVYESHINLDYVCTPRIGISKGKEKFWRFKIF</sequence>
<keyword id="KW-0227">DNA damage</keyword>
<keyword id="KW-0234">DNA repair</keyword>
<keyword id="KW-0378">Hydrolase</keyword>
<keyword id="KW-1185">Reference proteome</keyword>
<protein>
    <recommendedName>
        <fullName evidence="1">Putative 3-methyladenine DNA glycosylase</fullName>
        <ecNumber evidence="1">3.2.2.-</ecNumber>
    </recommendedName>
</protein>